<sequence>MSAVTRCEDGLVLRLYIQPKASRDSIVGLHGDEVKVAITAPPVDGQANSHLIKFLGKQFRVAKSQIVIEKGELGRHKQVKIIHPQQIPPEIAALTE</sequence>
<organism>
    <name type="scientific">Salmonella paratyphi A (strain AKU_12601)</name>
    <dbReference type="NCBI Taxonomy" id="554290"/>
    <lineage>
        <taxon>Bacteria</taxon>
        <taxon>Pseudomonadati</taxon>
        <taxon>Pseudomonadota</taxon>
        <taxon>Gammaproteobacteria</taxon>
        <taxon>Enterobacterales</taxon>
        <taxon>Enterobacteriaceae</taxon>
        <taxon>Salmonella</taxon>
    </lineage>
</organism>
<dbReference type="EMBL" id="FM200053">
    <property type="protein sequence ID" value="CAR61005.1"/>
    <property type="molecule type" value="Genomic_DNA"/>
</dbReference>
<dbReference type="RefSeq" id="WP_001277203.1">
    <property type="nucleotide sequence ID" value="NC_011147.1"/>
</dbReference>
<dbReference type="SMR" id="B5BFQ9"/>
<dbReference type="GeneID" id="66757408"/>
<dbReference type="KEGG" id="sek:SSPA2764"/>
<dbReference type="HOGENOM" id="CLU_130694_5_0_6"/>
<dbReference type="Proteomes" id="UP000001869">
    <property type="component" value="Chromosome"/>
</dbReference>
<dbReference type="GO" id="GO:0005737">
    <property type="term" value="C:cytoplasm"/>
    <property type="evidence" value="ECO:0007669"/>
    <property type="project" value="TreeGrafter"/>
</dbReference>
<dbReference type="Gene3D" id="3.30.1200.10">
    <property type="entry name" value="YggU-like"/>
    <property type="match status" value="1"/>
</dbReference>
<dbReference type="HAMAP" id="MF_00634">
    <property type="entry name" value="UPF0235"/>
    <property type="match status" value="1"/>
</dbReference>
<dbReference type="InterPro" id="IPR003746">
    <property type="entry name" value="DUF167"/>
</dbReference>
<dbReference type="InterPro" id="IPR036591">
    <property type="entry name" value="YggU-like_sf"/>
</dbReference>
<dbReference type="NCBIfam" id="TIGR00251">
    <property type="entry name" value="DUF167 family protein"/>
    <property type="match status" value="1"/>
</dbReference>
<dbReference type="NCBIfam" id="NF003466">
    <property type="entry name" value="PRK05090.1"/>
    <property type="match status" value="1"/>
</dbReference>
<dbReference type="PANTHER" id="PTHR13420">
    <property type="entry name" value="UPF0235 PROTEIN C15ORF40"/>
    <property type="match status" value="1"/>
</dbReference>
<dbReference type="PANTHER" id="PTHR13420:SF7">
    <property type="entry name" value="UPF0235 PROTEIN C15ORF40"/>
    <property type="match status" value="1"/>
</dbReference>
<dbReference type="Pfam" id="PF02594">
    <property type="entry name" value="DUF167"/>
    <property type="match status" value="1"/>
</dbReference>
<dbReference type="SMART" id="SM01152">
    <property type="entry name" value="DUF167"/>
    <property type="match status" value="1"/>
</dbReference>
<dbReference type="SUPFAM" id="SSF69786">
    <property type="entry name" value="YggU-like"/>
    <property type="match status" value="1"/>
</dbReference>
<gene>
    <name evidence="1" type="primary">yggU</name>
    <name type="ordered locus">SSPA2764</name>
</gene>
<protein>
    <recommendedName>
        <fullName evidence="1">UPF0235 protein YggU</fullName>
    </recommendedName>
</protein>
<accession>B5BFQ9</accession>
<feature type="chain" id="PRO_1000130712" description="UPF0235 protein YggU">
    <location>
        <begin position="1"/>
        <end position="96"/>
    </location>
</feature>
<comment type="similarity">
    <text evidence="1">Belongs to the UPF0235 family.</text>
</comment>
<proteinExistence type="inferred from homology"/>
<reference key="1">
    <citation type="journal article" date="2009" name="BMC Genomics">
        <title>Pseudogene accumulation in the evolutionary histories of Salmonella enterica serovars Paratyphi A and Typhi.</title>
        <authorList>
            <person name="Holt K.E."/>
            <person name="Thomson N.R."/>
            <person name="Wain J."/>
            <person name="Langridge G.C."/>
            <person name="Hasan R."/>
            <person name="Bhutta Z.A."/>
            <person name="Quail M.A."/>
            <person name="Norbertczak H."/>
            <person name="Walker D."/>
            <person name="Simmonds M."/>
            <person name="White B."/>
            <person name="Bason N."/>
            <person name="Mungall K."/>
            <person name="Dougan G."/>
            <person name="Parkhill J."/>
        </authorList>
    </citation>
    <scope>NUCLEOTIDE SEQUENCE [LARGE SCALE GENOMIC DNA]</scope>
    <source>
        <strain>AKU_12601</strain>
    </source>
</reference>
<evidence type="ECO:0000255" key="1">
    <source>
        <dbReference type="HAMAP-Rule" id="MF_00634"/>
    </source>
</evidence>
<name>YGGU_SALPK</name>